<name>YWRE_BACSU</name>
<proteinExistence type="predicted"/>
<evidence type="ECO:0000255" key="1"/>
<evidence type="ECO:0000305" key="2"/>
<accession>O05219</accession>
<gene>
    <name type="primary">ywrE</name>
    <name type="ordered locus">BSU36090</name>
</gene>
<reference key="1">
    <citation type="journal article" date="1997" name="Microbiology">
        <title>The Bacillus subtilis genome from gerBC (311 degrees) to licR (334 degrees).</title>
        <authorList>
            <person name="Presecan E."/>
            <person name="Moszer I."/>
            <person name="Boursier L."/>
            <person name="Cruz Ramos H."/>
            <person name="De La Fuente V."/>
            <person name="Hullo M.-F."/>
            <person name="Lelong C."/>
            <person name="Schleich S."/>
            <person name="Sekowska A."/>
            <person name="Song B.H."/>
            <person name="Villani G."/>
            <person name="Kunst F."/>
            <person name="Danchin A."/>
            <person name="Glaser P."/>
        </authorList>
    </citation>
    <scope>NUCLEOTIDE SEQUENCE [GENOMIC DNA]</scope>
    <source>
        <strain>168</strain>
    </source>
</reference>
<reference key="2">
    <citation type="journal article" date="1997" name="Nature">
        <title>The complete genome sequence of the Gram-positive bacterium Bacillus subtilis.</title>
        <authorList>
            <person name="Kunst F."/>
            <person name="Ogasawara N."/>
            <person name="Moszer I."/>
            <person name="Albertini A.M."/>
            <person name="Alloni G."/>
            <person name="Azevedo V."/>
            <person name="Bertero M.G."/>
            <person name="Bessieres P."/>
            <person name="Bolotin A."/>
            <person name="Borchert S."/>
            <person name="Borriss R."/>
            <person name="Boursier L."/>
            <person name="Brans A."/>
            <person name="Braun M."/>
            <person name="Brignell S.C."/>
            <person name="Bron S."/>
            <person name="Brouillet S."/>
            <person name="Bruschi C.V."/>
            <person name="Caldwell B."/>
            <person name="Capuano V."/>
            <person name="Carter N.M."/>
            <person name="Choi S.-K."/>
            <person name="Codani J.-J."/>
            <person name="Connerton I.F."/>
            <person name="Cummings N.J."/>
            <person name="Daniel R.A."/>
            <person name="Denizot F."/>
            <person name="Devine K.M."/>
            <person name="Duesterhoeft A."/>
            <person name="Ehrlich S.D."/>
            <person name="Emmerson P.T."/>
            <person name="Entian K.-D."/>
            <person name="Errington J."/>
            <person name="Fabret C."/>
            <person name="Ferrari E."/>
            <person name="Foulger D."/>
            <person name="Fritz C."/>
            <person name="Fujita M."/>
            <person name="Fujita Y."/>
            <person name="Fuma S."/>
            <person name="Galizzi A."/>
            <person name="Galleron N."/>
            <person name="Ghim S.-Y."/>
            <person name="Glaser P."/>
            <person name="Goffeau A."/>
            <person name="Golightly E.J."/>
            <person name="Grandi G."/>
            <person name="Guiseppi G."/>
            <person name="Guy B.J."/>
            <person name="Haga K."/>
            <person name="Haiech J."/>
            <person name="Harwood C.R."/>
            <person name="Henaut A."/>
            <person name="Hilbert H."/>
            <person name="Holsappel S."/>
            <person name="Hosono S."/>
            <person name="Hullo M.-F."/>
            <person name="Itaya M."/>
            <person name="Jones L.-M."/>
            <person name="Joris B."/>
            <person name="Karamata D."/>
            <person name="Kasahara Y."/>
            <person name="Klaerr-Blanchard M."/>
            <person name="Klein C."/>
            <person name="Kobayashi Y."/>
            <person name="Koetter P."/>
            <person name="Koningstein G."/>
            <person name="Krogh S."/>
            <person name="Kumano M."/>
            <person name="Kurita K."/>
            <person name="Lapidus A."/>
            <person name="Lardinois S."/>
            <person name="Lauber J."/>
            <person name="Lazarevic V."/>
            <person name="Lee S.-M."/>
            <person name="Levine A."/>
            <person name="Liu H."/>
            <person name="Masuda S."/>
            <person name="Mauel C."/>
            <person name="Medigue C."/>
            <person name="Medina N."/>
            <person name="Mellado R.P."/>
            <person name="Mizuno M."/>
            <person name="Moestl D."/>
            <person name="Nakai S."/>
            <person name="Noback M."/>
            <person name="Noone D."/>
            <person name="O'Reilly M."/>
            <person name="Ogawa K."/>
            <person name="Ogiwara A."/>
            <person name="Oudega B."/>
            <person name="Park S.-H."/>
            <person name="Parro V."/>
            <person name="Pohl T.M."/>
            <person name="Portetelle D."/>
            <person name="Porwollik S."/>
            <person name="Prescott A.M."/>
            <person name="Presecan E."/>
            <person name="Pujic P."/>
            <person name="Purnelle B."/>
            <person name="Rapoport G."/>
            <person name="Rey M."/>
            <person name="Reynolds S."/>
            <person name="Rieger M."/>
            <person name="Rivolta C."/>
            <person name="Rocha E."/>
            <person name="Roche B."/>
            <person name="Rose M."/>
            <person name="Sadaie Y."/>
            <person name="Sato T."/>
            <person name="Scanlan E."/>
            <person name="Schleich S."/>
            <person name="Schroeter R."/>
            <person name="Scoffone F."/>
            <person name="Sekiguchi J."/>
            <person name="Sekowska A."/>
            <person name="Seror S.J."/>
            <person name="Serror P."/>
            <person name="Shin B.-S."/>
            <person name="Soldo B."/>
            <person name="Sorokin A."/>
            <person name="Tacconi E."/>
            <person name="Takagi T."/>
            <person name="Takahashi H."/>
            <person name="Takemaru K."/>
            <person name="Takeuchi M."/>
            <person name="Tamakoshi A."/>
            <person name="Tanaka T."/>
            <person name="Terpstra P."/>
            <person name="Tognoni A."/>
            <person name="Tosato V."/>
            <person name="Uchiyama S."/>
            <person name="Vandenbol M."/>
            <person name="Vannier F."/>
            <person name="Vassarotti A."/>
            <person name="Viari A."/>
            <person name="Wambutt R."/>
            <person name="Wedler E."/>
            <person name="Wedler H."/>
            <person name="Weitzenegger T."/>
            <person name="Winters P."/>
            <person name="Wipat A."/>
            <person name="Yamamoto H."/>
            <person name="Yamane K."/>
            <person name="Yasumoto K."/>
            <person name="Yata K."/>
            <person name="Yoshida K."/>
            <person name="Yoshikawa H.-F."/>
            <person name="Zumstein E."/>
            <person name="Yoshikawa H."/>
            <person name="Danchin A."/>
        </authorList>
    </citation>
    <scope>NUCLEOTIDE SEQUENCE [LARGE SCALE GENOMIC DNA]</scope>
    <source>
        <strain>168</strain>
    </source>
</reference>
<organism>
    <name type="scientific">Bacillus subtilis (strain 168)</name>
    <dbReference type="NCBI Taxonomy" id="224308"/>
    <lineage>
        <taxon>Bacteria</taxon>
        <taxon>Bacillati</taxon>
        <taxon>Bacillota</taxon>
        <taxon>Bacilli</taxon>
        <taxon>Bacillales</taxon>
        <taxon>Bacillaceae</taxon>
        <taxon>Bacillus</taxon>
    </lineage>
</organism>
<protein>
    <recommendedName>
        <fullName>Uncharacterized protein YwrE</fullName>
    </recommendedName>
</protein>
<comment type="subcellular location">
    <subcellularLocation>
        <location evidence="2">Cell membrane</location>
        <topology evidence="2">Multi-pass membrane protein</topology>
    </subcellularLocation>
</comment>
<dbReference type="EMBL" id="Z93767">
    <property type="protein sequence ID" value="CAB07791.1"/>
    <property type="molecule type" value="Genomic_DNA"/>
</dbReference>
<dbReference type="EMBL" id="AL009126">
    <property type="protein sequence ID" value="CAB15626.1"/>
    <property type="molecule type" value="Genomic_DNA"/>
</dbReference>
<dbReference type="PIR" id="G70068">
    <property type="entry name" value="G70068"/>
</dbReference>
<dbReference type="RefSeq" id="NP_391490.1">
    <property type="nucleotide sequence ID" value="NC_000964.3"/>
</dbReference>
<dbReference type="RefSeq" id="WP_003227850.1">
    <property type="nucleotide sequence ID" value="NZ_OZ025638.1"/>
</dbReference>
<dbReference type="SMR" id="O05219"/>
<dbReference type="FunCoup" id="O05219">
    <property type="interactions" value="17"/>
</dbReference>
<dbReference type="STRING" id="224308.BSU36090"/>
<dbReference type="PaxDb" id="224308-BSU36090"/>
<dbReference type="EnsemblBacteria" id="CAB15626">
    <property type="protein sequence ID" value="CAB15626"/>
    <property type="gene ID" value="BSU_36090"/>
</dbReference>
<dbReference type="GeneID" id="936874"/>
<dbReference type="KEGG" id="bsu:BSU36090"/>
<dbReference type="PATRIC" id="fig|224308.179.peg.3906"/>
<dbReference type="eggNOG" id="ENOG5030DIC">
    <property type="taxonomic scope" value="Bacteria"/>
</dbReference>
<dbReference type="InParanoid" id="O05219"/>
<dbReference type="OrthoDB" id="2455559at2"/>
<dbReference type="BioCyc" id="BSUB:BSU36090-MONOMER"/>
<dbReference type="Proteomes" id="UP000001570">
    <property type="component" value="Chromosome"/>
</dbReference>
<dbReference type="GO" id="GO:0005886">
    <property type="term" value="C:plasma membrane"/>
    <property type="evidence" value="ECO:0007669"/>
    <property type="project" value="UniProtKB-SubCell"/>
</dbReference>
<dbReference type="InterPro" id="IPR025441">
    <property type="entry name" value="DUF4181"/>
</dbReference>
<dbReference type="Pfam" id="PF13789">
    <property type="entry name" value="DUF4181"/>
    <property type="match status" value="1"/>
</dbReference>
<feature type="chain" id="PRO_0000049995" description="Uncharacterized protein YwrE">
    <location>
        <begin position="1"/>
        <end position="111"/>
    </location>
</feature>
<feature type="transmembrane region" description="Helical" evidence="1">
    <location>
        <begin position="4"/>
        <end position="22"/>
    </location>
</feature>
<feature type="transmembrane region" description="Helical" evidence="1">
    <location>
        <begin position="49"/>
        <end position="71"/>
    </location>
</feature>
<feature type="transmembrane region" description="Helical" evidence="1">
    <location>
        <begin position="91"/>
        <end position="108"/>
    </location>
</feature>
<sequence length="111" mass="13545">MTNFWILMLIAITISLASQFFIKKKYGIDKSGWRYKHVSNTHKWIEITLLILFVFSLSFFPVEYLLLLFFIVIDSIRIFMEWHYRPEDKQYMYHIVEVSLMFMLLIYVCTL</sequence>
<keyword id="KW-1003">Cell membrane</keyword>
<keyword id="KW-0472">Membrane</keyword>
<keyword id="KW-1185">Reference proteome</keyword>
<keyword id="KW-0812">Transmembrane</keyword>
<keyword id="KW-1133">Transmembrane helix</keyword>